<evidence type="ECO:0000255" key="1">
    <source>
        <dbReference type="HAMAP-Rule" id="MF_00238"/>
    </source>
</evidence>
<keyword id="KW-0067">ATP-binding</keyword>
<keyword id="KW-0963">Cytoplasm</keyword>
<keyword id="KW-0418">Kinase</keyword>
<keyword id="KW-0547">Nucleotide-binding</keyword>
<keyword id="KW-1185">Reference proteome</keyword>
<keyword id="KW-0808">Transferase</keyword>
<accession>O51154</accession>
<name>KCY1_BORBU</name>
<proteinExistence type="inferred from homology"/>
<protein>
    <recommendedName>
        <fullName evidence="1">Cytidylate kinase 1</fullName>
        <shortName evidence="1">CK 1</shortName>
        <ecNumber evidence="1">2.7.4.25</ecNumber>
    </recommendedName>
    <alternativeName>
        <fullName evidence="1">Cytidine monophosphate kinase 1</fullName>
        <shortName evidence="1">CMP kinase 1</shortName>
    </alternativeName>
</protein>
<reference key="1">
    <citation type="journal article" date="1997" name="Nature">
        <title>Genomic sequence of a Lyme disease spirochaete, Borrelia burgdorferi.</title>
        <authorList>
            <person name="Fraser C.M."/>
            <person name="Casjens S."/>
            <person name="Huang W.M."/>
            <person name="Sutton G.G."/>
            <person name="Clayton R.A."/>
            <person name="Lathigra R."/>
            <person name="White O."/>
            <person name="Ketchum K.A."/>
            <person name="Dodson R.J."/>
            <person name="Hickey E.K."/>
            <person name="Gwinn M.L."/>
            <person name="Dougherty B.A."/>
            <person name="Tomb J.-F."/>
            <person name="Fleischmann R.D."/>
            <person name="Richardson D.L."/>
            <person name="Peterson J.D."/>
            <person name="Kerlavage A.R."/>
            <person name="Quackenbush J."/>
            <person name="Salzberg S.L."/>
            <person name="Hanson M."/>
            <person name="van Vugt R."/>
            <person name="Palmer N."/>
            <person name="Adams M.D."/>
            <person name="Gocayne J.D."/>
            <person name="Weidman J.F."/>
            <person name="Utterback T.R."/>
            <person name="Watthey L."/>
            <person name="McDonald L.A."/>
            <person name="Artiach P."/>
            <person name="Bowman C."/>
            <person name="Garland S.A."/>
            <person name="Fujii C."/>
            <person name="Cotton M.D."/>
            <person name="Horst K."/>
            <person name="Roberts K.M."/>
            <person name="Hatch B."/>
            <person name="Smith H.O."/>
            <person name="Venter J.C."/>
        </authorList>
    </citation>
    <scope>NUCLEOTIDE SEQUENCE [LARGE SCALE GENOMIC DNA]</scope>
    <source>
        <strain>ATCC 35210 / DSM 4680 / CIP 102532 / B31</strain>
    </source>
</reference>
<sequence length="221" mass="25602">MIIAIDGPSASGKSSIARELGVRLNYKFISSGHLYRIITLIAQRSLMNSCDFISEDSLLNLILENDISFNNFAFLLNGENVENQILNDKIDFQVSFYSSYVGIRNIVNKKLREVVKFSDDNYIIEGRDITTVVFPESEFKIYLDASVKVRALRRYKQRNGNETLEELERTLKRRDDVDKKKQYGKLKLSKGVFYLDTSYKGLDDVCNIIIEKFNLKKVRER</sequence>
<organism>
    <name type="scientific">Borreliella burgdorferi (strain ATCC 35210 / DSM 4680 / CIP 102532 / B31)</name>
    <name type="common">Borrelia burgdorferi</name>
    <dbReference type="NCBI Taxonomy" id="224326"/>
    <lineage>
        <taxon>Bacteria</taxon>
        <taxon>Pseudomonadati</taxon>
        <taxon>Spirochaetota</taxon>
        <taxon>Spirochaetia</taxon>
        <taxon>Spirochaetales</taxon>
        <taxon>Borreliaceae</taxon>
        <taxon>Borreliella</taxon>
    </lineage>
</organism>
<gene>
    <name evidence="1" type="primary">cmk1</name>
    <name type="ordered locus">BB_0128</name>
</gene>
<dbReference type="EC" id="2.7.4.25" evidence="1"/>
<dbReference type="EMBL" id="AE000783">
    <property type="protein sequence ID" value="AAC66509.1"/>
    <property type="molecule type" value="Genomic_DNA"/>
</dbReference>
<dbReference type="PIR" id="H70115">
    <property type="entry name" value="H70115"/>
</dbReference>
<dbReference type="RefSeq" id="NP_212262.1">
    <property type="nucleotide sequence ID" value="NC_001318.1"/>
</dbReference>
<dbReference type="SMR" id="O51154"/>
<dbReference type="STRING" id="224326.BB_0128"/>
<dbReference type="PaxDb" id="224326-BB_0128"/>
<dbReference type="EnsemblBacteria" id="AAC66509">
    <property type="protein sequence ID" value="AAC66509"/>
    <property type="gene ID" value="BB_0128"/>
</dbReference>
<dbReference type="KEGG" id="bbu:BB_0128"/>
<dbReference type="PATRIC" id="fig|224326.49.peg.526"/>
<dbReference type="HOGENOM" id="CLU_079959_0_2_12"/>
<dbReference type="OrthoDB" id="9807434at2"/>
<dbReference type="Proteomes" id="UP000001807">
    <property type="component" value="Chromosome"/>
</dbReference>
<dbReference type="GO" id="GO:0005737">
    <property type="term" value="C:cytoplasm"/>
    <property type="evidence" value="ECO:0007669"/>
    <property type="project" value="UniProtKB-SubCell"/>
</dbReference>
<dbReference type="GO" id="GO:0005524">
    <property type="term" value="F:ATP binding"/>
    <property type="evidence" value="ECO:0007669"/>
    <property type="project" value="UniProtKB-UniRule"/>
</dbReference>
<dbReference type="GO" id="GO:0036430">
    <property type="term" value="F:CMP kinase activity"/>
    <property type="evidence" value="ECO:0007669"/>
    <property type="project" value="RHEA"/>
</dbReference>
<dbReference type="GO" id="GO:0036431">
    <property type="term" value="F:dCMP kinase activity"/>
    <property type="evidence" value="ECO:0007669"/>
    <property type="project" value="RHEA"/>
</dbReference>
<dbReference type="GO" id="GO:0006220">
    <property type="term" value="P:pyrimidine nucleotide metabolic process"/>
    <property type="evidence" value="ECO:0007669"/>
    <property type="project" value="UniProtKB-UniRule"/>
</dbReference>
<dbReference type="CDD" id="cd02020">
    <property type="entry name" value="CMPK"/>
    <property type="match status" value="1"/>
</dbReference>
<dbReference type="Gene3D" id="3.40.50.300">
    <property type="entry name" value="P-loop containing nucleotide triphosphate hydrolases"/>
    <property type="match status" value="1"/>
</dbReference>
<dbReference type="HAMAP" id="MF_00238">
    <property type="entry name" value="Cytidyl_kinase_type1"/>
    <property type="match status" value="1"/>
</dbReference>
<dbReference type="InterPro" id="IPR003136">
    <property type="entry name" value="Cytidylate_kin"/>
</dbReference>
<dbReference type="InterPro" id="IPR011994">
    <property type="entry name" value="Cytidylate_kinase_dom"/>
</dbReference>
<dbReference type="InterPro" id="IPR027417">
    <property type="entry name" value="P-loop_NTPase"/>
</dbReference>
<dbReference type="NCBIfam" id="TIGR00017">
    <property type="entry name" value="cmk"/>
    <property type="match status" value="1"/>
</dbReference>
<dbReference type="Pfam" id="PF02224">
    <property type="entry name" value="Cytidylate_kin"/>
    <property type="match status" value="1"/>
</dbReference>
<dbReference type="SUPFAM" id="SSF52540">
    <property type="entry name" value="P-loop containing nucleoside triphosphate hydrolases"/>
    <property type="match status" value="1"/>
</dbReference>
<comment type="catalytic activity">
    <reaction evidence="1">
        <text>CMP + ATP = CDP + ADP</text>
        <dbReference type="Rhea" id="RHEA:11600"/>
        <dbReference type="ChEBI" id="CHEBI:30616"/>
        <dbReference type="ChEBI" id="CHEBI:58069"/>
        <dbReference type="ChEBI" id="CHEBI:60377"/>
        <dbReference type="ChEBI" id="CHEBI:456216"/>
        <dbReference type="EC" id="2.7.4.25"/>
    </reaction>
</comment>
<comment type="catalytic activity">
    <reaction evidence="1">
        <text>dCMP + ATP = dCDP + ADP</text>
        <dbReference type="Rhea" id="RHEA:25094"/>
        <dbReference type="ChEBI" id="CHEBI:30616"/>
        <dbReference type="ChEBI" id="CHEBI:57566"/>
        <dbReference type="ChEBI" id="CHEBI:58593"/>
        <dbReference type="ChEBI" id="CHEBI:456216"/>
        <dbReference type="EC" id="2.7.4.25"/>
    </reaction>
</comment>
<comment type="subcellular location">
    <subcellularLocation>
        <location evidence="1">Cytoplasm</location>
    </subcellularLocation>
</comment>
<comment type="similarity">
    <text evidence="1">Belongs to the cytidylate kinase family. Type 1 subfamily.</text>
</comment>
<feature type="chain" id="PRO_0000131886" description="Cytidylate kinase 1">
    <location>
        <begin position="1"/>
        <end position="221"/>
    </location>
</feature>
<feature type="binding site" evidence="1">
    <location>
        <begin position="7"/>
        <end position="15"/>
    </location>
    <ligand>
        <name>ATP</name>
        <dbReference type="ChEBI" id="CHEBI:30616"/>
    </ligand>
</feature>